<name>RL4_PROMM</name>
<proteinExistence type="inferred from homology"/>
<organism>
    <name type="scientific">Prochlorococcus marinus (strain MIT 9313)</name>
    <dbReference type="NCBI Taxonomy" id="74547"/>
    <lineage>
        <taxon>Bacteria</taxon>
        <taxon>Bacillati</taxon>
        <taxon>Cyanobacteriota</taxon>
        <taxon>Cyanophyceae</taxon>
        <taxon>Synechococcales</taxon>
        <taxon>Prochlorococcaceae</taxon>
        <taxon>Prochlorococcus</taxon>
    </lineage>
</organism>
<sequence>MAECVVHDWQGKEAGKASLELKVSKETTAVDLMHRAVLRQQAHSRQGTASTLTRAEVRGGGRKPYKQKGTGRARQGTIRTPLRPGGGIIFGPKPRTYNLAMNRKERRLALRTALMARIEDVIVVKDFGNSLKVPKTREISDALIRLGLAADAKVLIILSTPSEIIRRSVRNLEKVKLIAADQLNVFDLLHANSLVLSEEALAKIQEVYGDD</sequence>
<keyword id="KW-1185">Reference proteome</keyword>
<keyword id="KW-0687">Ribonucleoprotein</keyword>
<keyword id="KW-0689">Ribosomal protein</keyword>
<keyword id="KW-0694">RNA-binding</keyword>
<keyword id="KW-0699">rRNA-binding</keyword>
<protein>
    <recommendedName>
        <fullName evidence="1">Large ribosomal subunit protein uL4</fullName>
    </recommendedName>
    <alternativeName>
        <fullName evidence="3">50S ribosomal protein L4</fullName>
    </alternativeName>
</protein>
<accession>Q7V541</accession>
<feature type="chain" id="PRO_0000129257" description="Large ribosomal subunit protein uL4">
    <location>
        <begin position="1"/>
        <end position="211"/>
    </location>
</feature>
<feature type="region of interest" description="Disordered" evidence="2">
    <location>
        <begin position="41"/>
        <end position="78"/>
    </location>
</feature>
<feature type="compositionally biased region" description="Polar residues" evidence="2">
    <location>
        <begin position="41"/>
        <end position="53"/>
    </location>
</feature>
<feature type="compositionally biased region" description="Basic residues" evidence="2">
    <location>
        <begin position="60"/>
        <end position="71"/>
    </location>
</feature>
<gene>
    <name evidence="1" type="primary">rplD</name>
    <name evidence="1" type="synonym">rpl4</name>
    <name type="ordered locus">PMT_1733</name>
</gene>
<evidence type="ECO:0000255" key="1">
    <source>
        <dbReference type="HAMAP-Rule" id="MF_01328"/>
    </source>
</evidence>
<evidence type="ECO:0000256" key="2">
    <source>
        <dbReference type="SAM" id="MobiDB-lite"/>
    </source>
</evidence>
<evidence type="ECO:0000305" key="3"/>
<dbReference type="EMBL" id="BX548175">
    <property type="protein sequence ID" value="CAE21908.1"/>
    <property type="molecule type" value="Genomic_DNA"/>
</dbReference>
<dbReference type="RefSeq" id="WP_011131100.1">
    <property type="nucleotide sequence ID" value="NC_005071.1"/>
</dbReference>
<dbReference type="SMR" id="Q7V541"/>
<dbReference type="KEGG" id="pmt:PMT_1733"/>
<dbReference type="eggNOG" id="COG0088">
    <property type="taxonomic scope" value="Bacteria"/>
</dbReference>
<dbReference type="HOGENOM" id="CLU_041575_5_2_3"/>
<dbReference type="OrthoDB" id="9803201at2"/>
<dbReference type="Proteomes" id="UP000001423">
    <property type="component" value="Chromosome"/>
</dbReference>
<dbReference type="GO" id="GO:1990904">
    <property type="term" value="C:ribonucleoprotein complex"/>
    <property type="evidence" value="ECO:0007669"/>
    <property type="project" value="UniProtKB-KW"/>
</dbReference>
<dbReference type="GO" id="GO:0005840">
    <property type="term" value="C:ribosome"/>
    <property type="evidence" value="ECO:0007669"/>
    <property type="project" value="UniProtKB-KW"/>
</dbReference>
<dbReference type="GO" id="GO:0019843">
    <property type="term" value="F:rRNA binding"/>
    <property type="evidence" value="ECO:0007669"/>
    <property type="project" value="UniProtKB-UniRule"/>
</dbReference>
<dbReference type="GO" id="GO:0003735">
    <property type="term" value="F:structural constituent of ribosome"/>
    <property type="evidence" value="ECO:0007669"/>
    <property type="project" value="InterPro"/>
</dbReference>
<dbReference type="GO" id="GO:0006412">
    <property type="term" value="P:translation"/>
    <property type="evidence" value="ECO:0007669"/>
    <property type="project" value="UniProtKB-UniRule"/>
</dbReference>
<dbReference type="Gene3D" id="3.40.1370.10">
    <property type="match status" value="1"/>
</dbReference>
<dbReference type="HAMAP" id="MF_01328_B">
    <property type="entry name" value="Ribosomal_uL4_B"/>
    <property type="match status" value="1"/>
</dbReference>
<dbReference type="InterPro" id="IPR002136">
    <property type="entry name" value="Ribosomal_uL4"/>
</dbReference>
<dbReference type="InterPro" id="IPR013005">
    <property type="entry name" value="Ribosomal_uL4-like"/>
</dbReference>
<dbReference type="InterPro" id="IPR023574">
    <property type="entry name" value="Ribosomal_uL4_dom_sf"/>
</dbReference>
<dbReference type="NCBIfam" id="TIGR03953">
    <property type="entry name" value="rplD_bact"/>
    <property type="match status" value="1"/>
</dbReference>
<dbReference type="PANTHER" id="PTHR10746">
    <property type="entry name" value="50S RIBOSOMAL PROTEIN L4"/>
    <property type="match status" value="1"/>
</dbReference>
<dbReference type="PANTHER" id="PTHR10746:SF17">
    <property type="entry name" value="LARGE RIBOSOMAL SUBUNIT PROTEIN UL4C"/>
    <property type="match status" value="1"/>
</dbReference>
<dbReference type="Pfam" id="PF00573">
    <property type="entry name" value="Ribosomal_L4"/>
    <property type="match status" value="1"/>
</dbReference>
<dbReference type="SUPFAM" id="SSF52166">
    <property type="entry name" value="Ribosomal protein L4"/>
    <property type="match status" value="1"/>
</dbReference>
<reference key="1">
    <citation type="journal article" date="2003" name="Nature">
        <title>Genome divergence in two Prochlorococcus ecotypes reflects oceanic niche differentiation.</title>
        <authorList>
            <person name="Rocap G."/>
            <person name="Larimer F.W."/>
            <person name="Lamerdin J.E."/>
            <person name="Malfatti S."/>
            <person name="Chain P."/>
            <person name="Ahlgren N.A."/>
            <person name="Arellano A."/>
            <person name="Coleman M."/>
            <person name="Hauser L."/>
            <person name="Hess W.R."/>
            <person name="Johnson Z.I."/>
            <person name="Land M.L."/>
            <person name="Lindell D."/>
            <person name="Post A.F."/>
            <person name="Regala W."/>
            <person name="Shah M."/>
            <person name="Shaw S.L."/>
            <person name="Steglich C."/>
            <person name="Sullivan M.B."/>
            <person name="Ting C.S."/>
            <person name="Tolonen A."/>
            <person name="Webb E.A."/>
            <person name="Zinser E.R."/>
            <person name="Chisholm S.W."/>
        </authorList>
    </citation>
    <scope>NUCLEOTIDE SEQUENCE [LARGE SCALE GENOMIC DNA]</scope>
    <source>
        <strain>MIT 9313</strain>
    </source>
</reference>
<comment type="function">
    <text evidence="1">One of the primary rRNA binding proteins, this protein initially binds near the 5'-end of the 23S rRNA. It is important during the early stages of 50S assembly. It makes multiple contacts with different domains of the 23S rRNA in the assembled 50S subunit and ribosome.</text>
</comment>
<comment type="function">
    <text evidence="1">Forms part of the polypeptide exit tunnel.</text>
</comment>
<comment type="subunit">
    <text evidence="1">Part of the 50S ribosomal subunit.</text>
</comment>
<comment type="similarity">
    <text evidence="1">Belongs to the universal ribosomal protein uL4 family.</text>
</comment>